<proteinExistence type="inferred from homology"/>
<reference key="1">
    <citation type="journal article" date="2004" name="Nucleic Acids Res.">
        <title>Unique features revealed by the genome sequence of Acinetobacter sp. ADP1, a versatile and naturally transformation competent bacterium.</title>
        <authorList>
            <person name="Barbe V."/>
            <person name="Vallenet D."/>
            <person name="Fonknechten N."/>
            <person name="Kreimeyer A."/>
            <person name="Oztas S."/>
            <person name="Labarre L."/>
            <person name="Cruveiller S."/>
            <person name="Robert C."/>
            <person name="Duprat S."/>
            <person name="Wincker P."/>
            <person name="Ornston L.N."/>
            <person name="Weissenbach J."/>
            <person name="Marliere P."/>
            <person name="Cohen G.N."/>
            <person name="Medigue C."/>
        </authorList>
    </citation>
    <scope>NUCLEOTIDE SEQUENCE [LARGE SCALE GENOMIC DNA]</scope>
    <source>
        <strain>ATCC 33305 / BD413 / ADP1</strain>
    </source>
</reference>
<organism>
    <name type="scientific">Acinetobacter baylyi (strain ATCC 33305 / BD413 / ADP1)</name>
    <dbReference type="NCBI Taxonomy" id="62977"/>
    <lineage>
        <taxon>Bacteria</taxon>
        <taxon>Pseudomonadati</taxon>
        <taxon>Pseudomonadota</taxon>
        <taxon>Gammaproteobacteria</taxon>
        <taxon>Moraxellales</taxon>
        <taxon>Moraxellaceae</taxon>
        <taxon>Acinetobacter</taxon>
    </lineage>
</organism>
<protein>
    <recommendedName>
        <fullName evidence="1">Chaperone protein DnaJ</fullName>
    </recommendedName>
</protein>
<accession>Q6F6R1</accession>
<name>DNAJ_ACIAD</name>
<evidence type="ECO:0000255" key="1">
    <source>
        <dbReference type="HAMAP-Rule" id="MF_01152"/>
    </source>
</evidence>
<evidence type="ECO:0000256" key="2">
    <source>
        <dbReference type="SAM" id="MobiDB-lite"/>
    </source>
</evidence>
<dbReference type="EMBL" id="CR543861">
    <property type="protein sequence ID" value="CAG70256.1"/>
    <property type="molecule type" value="Genomic_DNA"/>
</dbReference>
<dbReference type="RefSeq" id="WP_004923086.1">
    <property type="nucleotide sequence ID" value="NC_005966.1"/>
</dbReference>
<dbReference type="SMR" id="Q6F6R1"/>
<dbReference type="STRING" id="202950.GCA_001485005_01601"/>
<dbReference type="GeneID" id="45235785"/>
<dbReference type="KEGG" id="aci:ACIAD3621"/>
<dbReference type="eggNOG" id="COG0484">
    <property type="taxonomic scope" value="Bacteria"/>
</dbReference>
<dbReference type="HOGENOM" id="CLU_017633_0_7_6"/>
<dbReference type="OrthoDB" id="9779889at2"/>
<dbReference type="BioCyc" id="ASP62977:ACIAD_RS16375-MONOMER"/>
<dbReference type="Proteomes" id="UP000000430">
    <property type="component" value="Chromosome"/>
</dbReference>
<dbReference type="GO" id="GO:0005737">
    <property type="term" value="C:cytoplasm"/>
    <property type="evidence" value="ECO:0007669"/>
    <property type="project" value="UniProtKB-SubCell"/>
</dbReference>
<dbReference type="GO" id="GO:0005524">
    <property type="term" value="F:ATP binding"/>
    <property type="evidence" value="ECO:0007669"/>
    <property type="project" value="InterPro"/>
</dbReference>
<dbReference type="GO" id="GO:0031072">
    <property type="term" value="F:heat shock protein binding"/>
    <property type="evidence" value="ECO:0007669"/>
    <property type="project" value="InterPro"/>
</dbReference>
<dbReference type="GO" id="GO:0051082">
    <property type="term" value="F:unfolded protein binding"/>
    <property type="evidence" value="ECO:0007669"/>
    <property type="project" value="UniProtKB-UniRule"/>
</dbReference>
<dbReference type="GO" id="GO:0008270">
    <property type="term" value="F:zinc ion binding"/>
    <property type="evidence" value="ECO:0007669"/>
    <property type="project" value="UniProtKB-UniRule"/>
</dbReference>
<dbReference type="GO" id="GO:0051085">
    <property type="term" value="P:chaperone cofactor-dependent protein refolding"/>
    <property type="evidence" value="ECO:0007669"/>
    <property type="project" value="TreeGrafter"/>
</dbReference>
<dbReference type="GO" id="GO:0006260">
    <property type="term" value="P:DNA replication"/>
    <property type="evidence" value="ECO:0007669"/>
    <property type="project" value="UniProtKB-KW"/>
</dbReference>
<dbReference type="GO" id="GO:0042026">
    <property type="term" value="P:protein refolding"/>
    <property type="evidence" value="ECO:0007669"/>
    <property type="project" value="TreeGrafter"/>
</dbReference>
<dbReference type="GO" id="GO:0009408">
    <property type="term" value="P:response to heat"/>
    <property type="evidence" value="ECO:0007669"/>
    <property type="project" value="InterPro"/>
</dbReference>
<dbReference type="CDD" id="cd06257">
    <property type="entry name" value="DnaJ"/>
    <property type="match status" value="1"/>
</dbReference>
<dbReference type="CDD" id="cd10747">
    <property type="entry name" value="DnaJ_C"/>
    <property type="match status" value="1"/>
</dbReference>
<dbReference type="CDD" id="cd10719">
    <property type="entry name" value="DnaJ_zf"/>
    <property type="match status" value="1"/>
</dbReference>
<dbReference type="FunFam" id="1.10.287.110:FF:000034">
    <property type="entry name" value="Chaperone protein DnaJ"/>
    <property type="match status" value="1"/>
</dbReference>
<dbReference type="FunFam" id="2.10.230.10:FF:000002">
    <property type="entry name" value="Molecular chaperone DnaJ"/>
    <property type="match status" value="1"/>
</dbReference>
<dbReference type="FunFam" id="2.60.260.20:FF:000004">
    <property type="entry name" value="Molecular chaperone DnaJ"/>
    <property type="match status" value="1"/>
</dbReference>
<dbReference type="Gene3D" id="1.10.287.110">
    <property type="entry name" value="DnaJ domain"/>
    <property type="match status" value="1"/>
</dbReference>
<dbReference type="Gene3D" id="2.10.230.10">
    <property type="entry name" value="Heat shock protein DnaJ, cysteine-rich domain"/>
    <property type="match status" value="1"/>
</dbReference>
<dbReference type="Gene3D" id="2.60.260.20">
    <property type="entry name" value="Urease metallochaperone UreE, N-terminal domain"/>
    <property type="match status" value="2"/>
</dbReference>
<dbReference type="HAMAP" id="MF_01152">
    <property type="entry name" value="DnaJ"/>
    <property type="match status" value="1"/>
</dbReference>
<dbReference type="InterPro" id="IPR012724">
    <property type="entry name" value="DnaJ"/>
</dbReference>
<dbReference type="InterPro" id="IPR002939">
    <property type="entry name" value="DnaJ_C"/>
</dbReference>
<dbReference type="InterPro" id="IPR001623">
    <property type="entry name" value="DnaJ_domain"/>
</dbReference>
<dbReference type="InterPro" id="IPR018253">
    <property type="entry name" value="DnaJ_domain_CS"/>
</dbReference>
<dbReference type="InterPro" id="IPR008971">
    <property type="entry name" value="HSP40/DnaJ_pept-bd"/>
</dbReference>
<dbReference type="InterPro" id="IPR001305">
    <property type="entry name" value="HSP_DnaJ_Cys-rich_dom"/>
</dbReference>
<dbReference type="InterPro" id="IPR036410">
    <property type="entry name" value="HSP_DnaJ_Cys-rich_dom_sf"/>
</dbReference>
<dbReference type="InterPro" id="IPR036869">
    <property type="entry name" value="J_dom_sf"/>
</dbReference>
<dbReference type="NCBIfam" id="TIGR02349">
    <property type="entry name" value="DnaJ_bact"/>
    <property type="match status" value="1"/>
</dbReference>
<dbReference type="NCBIfam" id="NF008035">
    <property type="entry name" value="PRK10767.1"/>
    <property type="match status" value="1"/>
</dbReference>
<dbReference type="PANTHER" id="PTHR43096:SF48">
    <property type="entry name" value="CHAPERONE PROTEIN DNAJ"/>
    <property type="match status" value="1"/>
</dbReference>
<dbReference type="PANTHER" id="PTHR43096">
    <property type="entry name" value="DNAJ HOMOLOG 1, MITOCHONDRIAL-RELATED"/>
    <property type="match status" value="1"/>
</dbReference>
<dbReference type="Pfam" id="PF00226">
    <property type="entry name" value="DnaJ"/>
    <property type="match status" value="1"/>
</dbReference>
<dbReference type="Pfam" id="PF01556">
    <property type="entry name" value="DnaJ_C"/>
    <property type="match status" value="1"/>
</dbReference>
<dbReference type="Pfam" id="PF00684">
    <property type="entry name" value="DnaJ_CXXCXGXG"/>
    <property type="match status" value="1"/>
</dbReference>
<dbReference type="PRINTS" id="PR00625">
    <property type="entry name" value="JDOMAIN"/>
</dbReference>
<dbReference type="SMART" id="SM00271">
    <property type="entry name" value="DnaJ"/>
    <property type="match status" value="1"/>
</dbReference>
<dbReference type="SUPFAM" id="SSF46565">
    <property type="entry name" value="Chaperone J-domain"/>
    <property type="match status" value="1"/>
</dbReference>
<dbReference type="SUPFAM" id="SSF57938">
    <property type="entry name" value="DnaJ/Hsp40 cysteine-rich domain"/>
    <property type="match status" value="1"/>
</dbReference>
<dbReference type="SUPFAM" id="SSF49493">
    <property type="entry name" value="HSP40/DnaJ peptide-binding domain"/>
    <property type="match status" value="2"/>
</dbReference>
<dbReference type="PROSITE" id="PS00636">
    <property type="entry name" value="DNAJ_1"/>
    <property type="match status" value="1"/>
</dbReference>
<dbReference type="PROSITE" id="PS50076">
    <property type="entry name" value="DNAJ_2"/>
    <property type="match status" value="1"/>
</dbReference>
<dbReference type="PROSITE" id="PS51188">
    <property type="entry name" value="ZF_CR"/>
    <property type="match status" value="1"/>
</dbReference>
<feature type="chain" id="PRO_0000070705" description="Chaperone protein DnaJ">
    <location>
        <begin position="1"/>
        <end position="368"/>
    </location>
</feature>
<feature type="domain" description="J" evidence="1">
    <location>
        <begin position="5"/>
        <end position="70"/>
    </location>
</feature>
<feature type="repeat" description="CXXCXGXG motif">
    <location>
        <begin position="145"/>
        <end position="152"/>
    </location>
</feature>
<feature type="repeat" description="CXXCXGXG motif">
    <location>
        <begin position="162"/>
        <end position="169"/>
    </location>
</feature>
<feature type="repeat" description="CXXCXGXG motif">
    <location>
        <begin position="184"/>
        <end position="191"/>
    </location>
</feature>
<feature type="repeat" description="CXXCXGXG motif">
    <location>
        <begin position="198"/>
        <end position="205"/>
    </location>
</feature>
<feature type="zinc finger region" description="CR-type" evidence="1">
    <location>
        <begin position="132"/>
        <end position="210"/>
    </location>
</feature>
<feature type="region of interest" description="Disordered" evidence="2">
    <location>
        <begin position="349"/>
        <end position="368"/>
    </location>
</feature>
<feature type="compositionally biased region" description="Basic and acidic residues" evidence="2">
    <location>
        <begin position="350"/>
        <end position="368"/>
    </location>
</feature>
<feature type="binding site" evidence="1">
    <location>
        <position position="145"/>
    </location>
    <ligand>
        <name>Zn(2+)</name>
        <dbReference type="ChEBI" id="CHEBI:29105"/>
        <label>1</label>
    </ligand>
</feature>
<feature type="binding site" evidence="1">
    <location>
        <position position="148"/>
    </location>
    <ligand>
        <name>Zn(2+)</name>
        <dbReference type="ChEBI" id="CHEBI:29105"/>
        <label>1</label>
    </ligand>
</feature>
<feature type="binding site" evidence="1">
    <location>
        <position position="162"/>
    </location>
    <ligand>
        <name>Zn(2+)</name>
        <dbReference type="ChEBI" id="CHEBI:29105"/>
        <label>2</label>
    </ligand>
</feature>
<feature type="binding site" evidence="1">
    <location>
        <position position="165"/>
    </location>
    <ligand>
        <name>Zn(2+)</name>
        <dbReference type="ChEBI" id="CHEBI:29105"/>
        <label>2</label>
    </ligand>
</feature>
<feature type="binding site" evidence="1">
    <location>
        <position position="184"/>
    </location>
    <ligand>
        <name>Zn(2+)</name>
        <dbReference type="ChEBI" id="CHEBI:29105"/>
        <label>2</label>
    </ligand>
</feature>
<feature type="binding site" evidence="1">
    <location>
        <position position="187"/>
    </location>
    <ligand>
        <name>Zn(2+)</name>
        <dbReference type="ChEBI" id="CHEBI:29105"/>
        <label>2</label>
    </ligand>
</feature>
<feature type="binding site" evidence="1">
    <location>
        <position position="198"/>
    </location>
    <ligand>
        <name>Zn(2+)</name>
        <dbReference type="ChEBI" id="CHEBI:29105"/>
        <label>1</label>
    </ligand>
</feature>
<feature type="binding site" evidence="1">
    <location>
        <position position="201"/>
    </location>
    <ligand>
        <name>Zn(2+)</name>
        <dbReference type="ChEBI" id="CHEBI:29105"/>
        <label>1</label>
    </ligand>
</feature>
<gene>
    <name evidence="1" type="primary">dnaJ</name>
    <name type="ordered locus">ACIAD3621</name>
</gene>
<keyword id="KW-0143">Chaperone</keyword>
<keyword id="KW-0963">Cytoplasm</keyword>
<keyword id="KW-0235">DNA replication</keyword>
<keyword id="KW-0479">Metal-binding</keyword>
<keyword id="KW-0677">Repeat</keyword>
<keyword id="KW-0346">Stress response</keyword>
<keyword id="KW-0862">Zinc</keyword>
<keyword id="KW-0863">Zinc-finger</keyword>
<comment type="function">
    <text evidence="1">Participates actively in the response to hyperosmotic and heat shock by preventing the aggregation of stress-denatured proteins and by disaggregating proteins, also in an autonomous, DnaK-independent fashion. Unfolded proteins bind initially to DnaJ; upon interaction with the DnaJ-bound protein, DnaK hydrolyzes its bound ATP, resulting in the formation of a stable complex. GrpE releases ADP from DnaK; ATP binding to DnaK triggers the release of the substrate protein, thus completing the reaction cycle. Several rounds of ATP-dependent interactions between DnaJ, DnaK and GrpE are required for fully efficient folding. Also involved, together with DnaK and GrpE, in the DNA replication of plasmids through activation of initiation proteins.</text>
</comment>
<comment type="cofactor">
    <cofactor evidence="1">
        <name>Zn(2+)</name>
        <dbReference type="ChEBI" id="CHEBI:29105"/>
    </cofactor>
    <text evidence="1">Binds 2 Zn(2+) ions per monomer.</text>
</comment>
<comment type="subunit">
    <text evidence="1">Homodimer.</text>
</comment>
<comment type="subcellular location">
    <subcellularLocation>
        <location evidence="1">Cytoplasm</location>
    </subcellularLocation>
</comment>
<comment type="domain">
    <text evidence="1">The J domain is necessary and sufficient to stimulate DnaK ATPase activity. Zinc center 1 plays an important role in the autonomous, DnaK-independent chaperone activity of DnaJ. Zinc center 2 is essential for interaction with DnaK and for DnaJ activity.</text>
</comment>
<comment type="similarity">
    <text evidence="1">Belongs to the DnaJ family.</text>
</comment>
<sequence>MAKRDYYEVLGVSKTASDDEIKKAYRKLAMKYHPDRNPDNAEAEDKFKEASEAYEVLSDSEKRSMYDRMGHNAFEGGGGGGFGGFSAEDIFSQFGDIFGGAFGGGGRQQQRQRRGSDLRYVMELSLEEAVRGVKKTITFTAPAPCEVCDGKGSKNPNDVETCRTCHGTGQVRMQQGFFSVQQTCGTCRGQGKIIKNPCQSCHGSGVADRQQTLEVTIPAGVDNGDRVRLSGKGEAVRDGQAGDLYVEVVVREHEIFQRDGADLYMDVPVSIADAALGKEIEIPTLEGRVSLKIPEGTQTGKLFRLRGKGVRPVRSSMVGDLLCRVVVETPVNLTSRQRELFKELQATLDGDEHSSSPKKKSFFDRLFD</sequence>